<protein>
    <recommendedName>
        <fullName evidence="6">Hexokinase-1</fullName>
        <ecNumber evidence="5 8">2.7.1.1</ecNumber>
    </recommendedName>
</protein>
<accession>Q09756</accession>
<reference key="1">
    <citation type="journal article" date="1996" name="FEBS Lett.">
        <title>Schizosaccharomyces pombe possesses an unusual and a conventional hexokinase: biochemical and molecular characterization of both hexokinases.</title>
        <authorList>
            <person name="Petit T."/>
            <person name="Blazquez M.A."/>
            <person name="Gancedo C."/>
        </authorList>
    </citation>
    <scope>NUCLEOTIDE SEQUENCE [MRNA]</scope>
    <scope>FUNCTION</scope>
    <scope>CATALYTIC ACTIVITY</scope>
</reference>
<reference key="2">
    <citation type="journal article" date="2002" name="Nature">
        <title>The genome sequence of Schizosaccharomyces pombe.</title>
        <authorList>
            <person name="Wood V."/>
            <person name="Gwilliam R."/>
            <person name="Rajandream M.A."/>
            <person name="Lyne M.H."/>
            <person name="Lyne R."/>
            <person name="Stewart A."/>
            <person name="Sgouros J.G."/>
            <person name="Peat N."/>
            <person name="Hayles J."/>
            <person name="Baker S.G."/>
            <person name="Basham D."/>
            <person name="Bowman S."/>
            <person name="Brooks K."/>
            <person name="Brown D."/>
            <person name="Brown S."/>
            <person name="Chillingworth T."/>
            <person name="Churcher C.M."/>
            <person name="Collins M."/>
            <person name="Connor R."/>
            <person name="Cronin A."/>
            <person name="Davis P."/>
            <person name="Feltwell T."/>
            <person name="Fraser A."/>
            <person name="Gentles S."/>
            <person name="Goble A."/>
            <person name="Hamlin N."/>
            <person name="Harris D.E."/>
            <person name="Hidalgo J."/>
            <person name="Hodgson G."/>
            <person name="Holroyd S."/>
            <person name="Hornsby T."/>
            <person name="Howarth S."/>
            <person name="Huckle E.J."/>
            <person name="Hunt S."/>
            <person name="Jagels K."/>
            <person name="James K.D."/>
            <person name="Jones L."/>
            <person name="Jones M."/>
            <person name="Leather S."/>
            <person name="McDonald S."/>
            <person name="McLean J."/>
            <person name="Mooney P."/>
            <person name="Moule S."/>
            <person name="Mungall K.L."/>
            <person name="Murphy L.D."/>
            <person name="Niblett D."/>
            <person name="Odell C."/>
            <person name="Oliver K."/>
            <person name="O'Neil S."/>
            <person name="Pearson D."/>
            <person name="Quail M.A."/>
            <person name="Rabbinowitsch E."/>
            <person name="Rutherford K.M."/>
            <person name="Rutter S."/>
            <person name="Saunders D."/>
            <person name="Seeger K."/>
            <person name="Sharp S."/>
            <person name="Skelton J."/>
            <person name="Simmonds M.N."/>
            <person name="Squares R."/>
            <person name="Squares S."/>
            <person name="Stevens K."/>
            <person name="Taylor K."/>
            <person name="Taylor R.G."/>
            <person name="Tivey A."/>
            <person name="Walsh S.V."/>
            <person name="Warren T."/>
            <person name="Whitehead S."/>
            <person name="Woodward J.R."/>
            <person name="Volckaert G."/>
            <person name="Aert R."/>
            <person name="Robben J."/>
            <person name="Grymonprez B."/>
            <person name="Weltjens I."/>
            <person name="Vanstreels E."/>
            <person name="Rieger M."/>
            <person name="Schaefer M."/>
            <person name="Mueller-Auer S."/>
            <person name="Gabel C."/>
            <person name="Fuchs M."/>
            <person name="Duesterhoeft A."/>
            <person name="Fritzc C."/>
            <person name="Holzer E."/>
            <person name="Moestl D."/>
            <person name="Hilbert H."/>
            <person name="Borzym K."/>
            <person name="Langer I."/>
            <person name="Beck A."/>
            <person name="Lehrach H."/>
            <person name="Reinhardt R."/>
            <person name="Pohl T.M."/>
            <person name="Eger P."/>
            <person name="Zimmermann W."/>
            <person name="Wedler H."/>
            <person name="Wambutt R."/>
            <person name="Purnelle B."/>
            <person name="Goffeau A."/>
            <person name="Cadieu E."/>
            <person name="Dreano S."/>
            <person name="Gloux S."/>
            <person name="Lelaure V."/>
            <person name="Mottier S."/>
            <person name="Galibert F."/>
            <person name="Aves S.J."/>
            <person name="Xiang Z."/>
            <person name="Hunt C."/>
            <person name="Moore K."/>
            <person name="Hurst S.M."/>
            <person name="Lucas M."/>
            <person name="Rochet M."/>
            <person name="Gaillardin C."/>
            <person name="Tallada V.A."/>
            <person name="Garzon A."/>
            <person name="Thode G."/>
            <person name="Daga R.R."/>
            <person name="Cruzado L."/>
            <person name="Jimenez J."/>
            <person name="Sanchez M."/>
            <person name="del Rey F."/>
            <person name="Benito J."/>
            <person name="Dominguez A."/>
            <person name="Revuelta J.L."/>
            <person name="Moreno S."/>
            <person name="Armstrong J."/>
            <person name="Forsburg S.L."/>
            <person name="Cerutti L."/>
            <person name="Lowe T."/>
            <person name="McCombie W.R."/>
            <person name="Paulsen I."/>
            <person name="Potashkin J."/>
            <person name="Shpakovski G.V."/>
            <person name="Ussery D."/>
            <person name="Barrell B.G."/>
            <person name="Nurse P."/>
        </authorList>
    </citation>
    <scope>NUCLEOTIDE SEQUENCE [LARGE SCALE GENOMIC DNA]</scope>
    <source>
        <strain>972 / ATCC 24843</strain>
    </source>
</reference>
<reference key="3">
    <citation type="journal article" date="1998" name="Biochem. Biophys. Res. Commun.">
        <title>A mutation Ser213/Asn in the hexokinase 1 from Schizosaccharomyces pombe increases its affinity for glucose.</title>
        <authorList>
            <person name="Petit T."/>
            <person name="Herrero P."/>
            <person name="Gancedo C."/>
        </authorList>
    </citation>
    <scope>FUNCTION</scope>
    <scope>CATALYTIC ACTIVITY</scope>
    <scope>MUTAGENESIS OF SER-213</scope>
</reference>
<keyword id="KW-0067">ATP-binding</keyword>
<keyword id="KW-0324">Glycolysis</keyword>
<keyword id="KW-0418">Kinase</keyword>
<keyword id="KW-0547">Nucleotide-binding</keyword>
<keyword id="KW-1185">Reference proteome</keyword>
<keyword id="KW-0808">Transferase</keyword>
<evidence type="ECO:0000250" key="1">
    <source>
        <dbReference type="UniProtKB" id="P19367"/>
    </source>
</evidence>
<evidence type="ECO:0000250" key="2">
    <source>
        <dbReference type="UniProtKB" id="P35557"/>
    </source>
</evidence>
<evidence type="ECO:0000255" key="3">
    <source>
        <dbReference type="PROSITE-ProRule" id="PRU01084"/>
    </source>
</evidence>
<evidence type="ECO:0000269" key="4">
    <source>
    </source>
</evidence>
<evidence type="ECO:0000269" key="5">
    <source>
    </source>
</evidence>
<evidence type="ECO:0000303" key="6">
    <source>
    </source>
</evidence>
<evidence type="ECO:0000305" key="7"/>
<evidence type="ECO:0000305" key="8">
    <source>
    </source>
</evidence>
<feature type="chain" id="PRO_0000197609" description="Hexokinase-1">
    <location>
        <begin position="1"/>
        <end position="484"/>
    </location>
</feature>
<feature type="domain" description="Hexokinase" evidence="3">
    <location>
        <begin position="25"/>
        <end position="465"/>
    </location>
</feature>
<feature type="region of interest" description="Hexokinase small subdomain" evidence="3">
    <location>
        <begin position="79"/>
        <end position="212"/>
    </location>
</feature>
<feature type="region of interest" description="Hexokinase large subdomain" evidence="3">
    <location>
        <begin position="213"/>
        <end position="454"/>
    </location>
</feature>
<feature type="binding site" evidence="1">
    <location>
        <begin position="90"/>
        <end position="95"/>
    </location>
    <ligand>
        <name>ATP</name>
        <dbReference type="ChEBI" id="CHEBI:30616"/>
    </ligand>
</feature>
<feature type="binding site" evidence="2">
    <location>
        <begin position="160"/>
        <end position="161"/>
    </location>
    <ligand>
        <name>substrate</name>
    </ligand>
</feature>
<feature type="binding site" evidence="2">
    <location>
        <begin position="177"/>
        <end position="178"/>
    </location>
    <ligand>
        <name>substrate</name>
    </ligand>
</feature>
<feature type="binding site" evidence="2">
    <location>
        <begin position="213"/>
        <end position="214"/>
    </location>
    <ligand>
        <name>substrate</name>
    </ligand>
</feature>
<feature type="binding site" evidence="2">
    <location>
        <position position="237"/>
    </location>
    <ligand>
        <name>ATP</name>
        <dbReference type="ChEBI" id="CHEBI:30616"/>
    </ligand>
</feature>
<feature type="binding site" evidence="2">
    <location>
        <position position="240"/>
    </location>
    <ligand>
        <name>substrate</name>
    </ligand>
</feature>
<feature type="binding site" evidence="2">
    <location>
        <position position="269"/>
    </location>
    <ligand>
        <name>substrate</name>
    </ligand>
</feature>
<feature type="binding site" evidence="2">
    <location>
        <position position="302"/>
    </location>
    <ligand>
        <name>substrate</name>
    </ligand>
</feature>
<feature type="binding site" evidence="2">
    <location>
        <begin position="307"/>
        <end position="308"/>
    </location>
    <ligand>
        <name>ATP</name>
        <dbReference type="ChEBI" id="CHEBI:30616"/>
    </ligand>
</feature>
<feature type="binding site" evidence="2">
    <location>
        <begin position="344"/>
        <end position="348"/>
    </location>
    <ligand>
        <name>ATP</name>
        <dbReference type="ChEBI" id="CHEBI:30616"/>
    </ligand>
</feature>
<feature type="binding site" evidence="2">
    <location>
        <begin position="419"/>
        <end position="423"/>
    </location>
    <ligand>
        <name>ATP</name>
        <dbReference type="ChEBI" id="CHEBI:30616"/>
    </ligand>
</feature>
<feature type="mutagenesis site" description="Increased affinity for D-glucose." evidence="5">
    <original>S</original>
    <variation>N</variation>
    <location>
        <position position="213"/>
    </location>
</feature>
<name>HXK1_SCHPO</name>
<comment type="function">
    <text evidence="4 5">Catalyzes the phosphorylation of hexose (six-carbon sugars) to hexose 6-phosphate (PubMed:8549830, PubMed:9790975). Phosphorylates D-fructose, D-mannose and, to a lower extent, D-glucose (PubMed:8549830, PubMed:9790975). Compared to hxk2, has low affinity for D-glucose (PubMed:8549830, PubMed:9790975).</text>
</comment>
<comment type="catalytic activity">
    <reaction evidence="5 8">
        <text>a D-hexose + ATP = a D-hexose 6-phosphate + ADP + H(+)</text>
        <dbReference type="Rhea" id="RHEA:22740"/>
        <dbReference type="ChEBI" id="CHEBI:4194"/>
        <dbReference type="ChEBI" id="CHEBI:15378"/>
        <dbReference type="ChEBI" id="CHEBI:30616"/>
        <dbReference type="ChEBI" id="CHEBI:229467"/>
        <dbReference type="ChEBI" id="CHEBI:456216"/>
        <dbReference type="EC" id="2.7.1.1"/>
    </reaction>
    <physiologicalReaction direction="left-to-right" evidence="5 8">
        <dbReference type="Rhea" id="RHEA:22741"/>
    </physiologicalReaction>
</comment>
<comment type="catalytic activity">
    <reaction evidence="5 8">
        <text>D-mannose + ATP = D-mannose 6-phosphate + ADP + H(+)</text>
        <dbReference type="Rhea" id="RHEA:11028"/>
        <dbReference type="ChEBI" id="CHEBI:4208"/>
        <dbReference type="ChEBI" id="CHEBI:15378"/>
        <dbReference type="ChEBI" id="CHEBI:30616"/>
        <dbReference type="ChEBI" id="CHEBI:58735"/>
        <dbReference type="ChEBI" id="CHEBI:456216"/>
        <dbReference type="EC" id="2.7.1.1"/>
    </reaction>
    <physiologicalReaction direction="left-to-right" evidence="5 8">
        <dbReference type="Rhea" id="RHEA:11029"/>
    </physiologicalReaction>
</comment>
<comment type="catalytic activity">
    <reaction evidence="5 8">
        <text>D-fructose + ATP = D-fructose 6-phosphate + ADP + H(+)</text>
        <dbReference type="Rhea" id="RHEA:16125"/>
        <dbReference type="ChEBI" id="CHEBI:15378"/>
        <dbReference type="ChEBI" id="CHEBI:30616"/>
        <dbReference type="ChEBI" id="CHEBI:37721"/>
        <dbReference type="ChEBI" id="CHEBI:61527"/>
        <dbReference type="ChEBI" id="CHEBI:456216"/>
        <dbReference type="EC" id="2.7.1.1"/>
    </reaction>
    <physiologicalReaction direction="left-to-right" evidence="5 8">
        <dbReference type="Rhea" id="RHEA:16126"/>
    </physiologicalReaction>
</comment>
<comment type="catalytic activity">
    <reaction evidence="5 8">
        <text>D-glucose + ATP = D-glucose 6-phosphate + ADP + H(+)</text>
        <dbReference type="Rhea" id="RHEA:17825"/>
        <dbReference type="ChEBI" id="CHEBI:4167"/>
        <dbReference type="ChEBI" id="CHEBI:15378"/>
        <dbReference type="ChEBI" id="CHEBI:30616"/>
        <dbReference type="ChEBI" id="CHEBI:61548"/>
        <dbReference type="ChEBI" id="CHEBI:456216"/>
        <dbReference type="EC" id="2.7.1.1"/>
    </reaction>
    <physiologicalReaction direction="left-to-right" evidence="5 8">
        <dbReference type="Rhea" id="RHEA:17826"/>
    </physiologicalReaction>
</comment>
<comment type="biophysicochemical properties">
    <kinetics>
        <KM evidence="5">1.5 mM for D-fructose</KM>
        <KM evidence="5">9.4 mM for D-glucose</KM>
        <KM evidence="5">0.2 mM for D-mannose</KM>
    </kinetics>
</comment>
<comment type="pathway">
    <text evidence="8">Carbohydrate metabolism; hexose metabolism.</text>
</comment>
<comment type="pathway">
    <text evidence="8">Carbohydrate degradation; glycolysis; D-glyceraldehyde 3-phosphate and glycerone phosphate from D-glucose: step 1/4.</text>
</comment>
<comment type="subunit">
    <text evidence="1">Monomer.</text>
</comment>
<comment type="similarity">
    <text evidence="3 7">Belongs to the hexokinase family.</text>
</comment>
<organism>
    <name type="scientific">Schizosaccharomyces pombe (strain 972 / ATCC 24843)</name>
    <name type="common">Fission yeast</name>
    <dbReference type="NCBI Taxonomy" id="284812"/>
    <lineage>
        <taxon>Eukaryota</taxon>
        <taxon>Fungi</taxon>
        <taxon>Dikarya</taxon>
        <taxon>Ascomycota</taxon>
        <taxon>Taphrinomycotina</taxon>
        <taxon>Schizosaccharomycetes</taxon>
        <taxon>Schizosaccharomycetales</taxon>
        <taxon>Schizosaccharomycetaceae</taxon>
        <taxon>Schizosaccharomyces</taxon>
    </lineage>
</organism>
<sequence length="484" mass="53598">MSLHDAYHWPSRTPSRKGSNIKLNKTLQDHLDELEEQFTIPTELLHRVTDRFVSELYKGLTTNPGDVPMVPTWIIGTPDGNEHGSYLALDLGGTNLRVCAVEVQGNGKFDITQSKYRLPQELKVGTREALFDYIADCIKKFVEEVHPGKSQNLEIGFTFSYPCVQRSINDASLVAWTKGFDIDGVEGESVGPLLSAALKRVGCNNVRLNAILSDTTGTLVASNYASPGTEIGVIFGTGCNACYIEKFSEIPKLHKYDFPEDMNMIINCEWCDFDNQHVVLPRTKYDVAIDEESPRPGLQTYEKMIAGCYLGDILRRILLDLYEQGALFNGQDVTKIRDPLAMDTSVLSAIEVDPFENLDETQTLFEETYGLKTTEEERQFIRRACELIGTRSARLSACGVCALVRKMNKPSMIVGTDGSVYNLYPRFKDRLAQAFKDILGEEIGSKVVTIPAEDGSGVGAALVSALEAKGKALTSDILAEHLKN</sequence>
<proteinExistence type="evidence at protein level"/>
<dbReference type="EC" id="2.7.1.1" evidence="5 8"/>
<dbReference type="EMBL" id="X92894">
    <property type="protein sequence ID" value="CAA63487.1"/>
    <property type="molecule type" value="mRNA"/>
</dbReference>
<dbReference type="EMBL" id="CU329670">
    <property type="protein sequence ID" value="CAA90848.1"/>
    <property type="molecule type" value="Genomic_DNA"/>
</dbReference>
<dbReference type="PIR" id="S68694">
    <property type="entry name" value="S68694"/>
</dbReference>
<dbReference type="RefSeq" id="NP_592948.1">
    <property type="nucleotide sequence ID" value="NM_001018349.2"/>
</dbReference>
<dbReference type="SMR" id="Q09756"/>
<dbReference type="BioGRID" id="279088">
    <property type="interactions" value="7"/>
</dbReference>
<dbReference type="FunCoup" id="Q09756">
    <property type="interactions" value="281"/>
</dbReference>
<dbReference type="STRING" id="284812.Q09756"/>
<dbReference type="iPTMnet" id="Q09756"/>
<dbReference type="SwissPalm" id="Q09756"/>
<dbReference type="PaxDb" id="4896-SPAC24H6.04.1"/>
<dbReference type="EnsemblFungi" id="SPAC24H6.04.1">
    <property type="protein sequence ID" value="SPAC24H6.04.1:pep"/>
    <property type="gene ID" value="SPAC24H6.04"/>
</dbReference>
<dbReference type="GeneID" id="2542634"/>
<dbReference type="KEGG" id="spo:2542634"/>
<dbReference type="PomBase" id="SPAC24H6.04">
    <property type="gene designation" value="hxk1"/>
</dbReference>
<dbReference type="VEuPathDB" id="FungiDB:SPAC24H6.04"/>
<dbReference type="eggNOG" id="KOG1369">
    <property type="taxonomic scope" value="Eukaryota"/>
</dbReference>
<dbReference type="HOGENOM" id="CLU_014393_5_2_1"/>
<dbReference type="InParanoid" id="Q09756"/>
<dbReference type="OMA" id="ADCVQQF"/>
<dbReference type="PhylomeDB" id="Q09756"/>
<dbReference type="BRENDA" id="2.7.1.1">
    <property type="organism ID" value="5613"/>
</dbReference>
<dbReference type="Reactome" id="R-SPO-170822">
    <property type="pathway name" value="Regulation of Glucokinase by Glucokinase Regulatory Protein"/>
</dbReference>
<dbReference type="Reactome" id="R-SPO-446205">
    <property type="pathway name" value="Synthesis of GDP-mannose"/>
</dbReference>
<dbReference type="Reactome" id="R-SPO-6798695">
    <property type="pathway name" value="Neutrophil degranulation"/>
</dbReference>
<dbReference type="Reactome" id="R-SPO-70171">
    <property type="pathway name" value="Glycolysis"/>
</dbReference>
<dbReference type="SABIO-RK" id="Q09756"/>
<dbReference type="UniPathway" id="UPA00109">
    <property type="reaction ID" value="UER00180"/>
</dbReference>
<dbReference type="UniPathway" id="UPA00242"/>
<dbReference type="PRO" id="PR:Q09756"/>
<dbReference type="Proteomes" id="UP000002485">
    <property type="component" value="Chromosome I"/>
</dbReference>
<dbReference type="GO" id="GO:0005829">
    <property type="term" value="C:cytosol"/>
    <property type="evidence" value="ECO:0007005"/>
    <property type="project" value="PomBase"/>
</dbReference>
<dbReference type="GO" id="GO:0005739">
    <property type="term" value="C:mitochondrion"/>
    <property type="evidence" value="ECO:0000318"/>
    <property type="project" value="GO_Central"/>
</dbReference>
<dbReference type="GO" id="GO:0005524">
    <property type="term" value="F:ATP binding"/>
    <property type="evidence" value="ECO:0000255"/>
    <property type="project" value="PomBase"/>
</dbReference>
<dbReference type="GO" id="GO:0005536">
    <property type="term" value="F:D-glucose binding"/>
    <property type="evidence" value="ECO:0007669"/>
    <property type="project" value="InterPro"/>
</dbReference>
<dbReference type="GO" id="GO:0008865">
    <property type="term" value="F:fructokinase activity"/>
    <property type="evidence" value="ECO:0000314"/>
    <property type="project" value="PomBase"/>
</dbReference>
<dbReference type="GO" id="GO:0004340">
    <property type="term" value="F:glucokinase activity"/>
    <property type="evidence" value="ECO:0000314"/>
    <property type="project" value="PomBase"/>
</dbReference>
<dbReference type="GO" id="GO:0004396">
    <property type="term" value="F:hexokinase activity"/>
    <property type="evidence" value="ECO:0000314"/>
    <property type="project" value="PomBase"/>
</dbReference>
<dbReference type="GO" id="GO:0019158">
    <property type="term" value="F:mannokinase activity"/>
    <property type="evidence" value="ECO:0000314"/>
    <property type="project" value="PomBase"/>
</dbReference>
<dbReference type="GO" id="GO:0061621">
    <property type="term" value="P:canonical glycolysis"/>
    <property type="evidence" value="ECO:0000305"/>
    <property type="project" value="PomBase"/>
</dbReference>
<dbReference type="GO" id="GO:0006000">
    <property type="term" value="P:fructose metabolic process"/>
    <property type="evidence" value="ECO:0000314"/>
    <property type="project" value="PomBase"/>
</dbReference>
<dbReference type="GO" id="GO:0051156">
    <property type="term" value="P:glucose 6-phosphate metabolic process"/>
    <property type="evidence" value="ECO:0000318"/>
    <property type="project" value="GO_Central"/>
</dbReference>
<dbReference type="GO" id="GO:0006006">
    <property type="term" value="P:glucose metabolic process"/>
    <property type="evidence" value="ECO:0000314"/>
    <property type="project" value="PomBase"/>
</dbReference>
<dbReference type="GO" id="GO:0006096">
    <property type="term" value="P:glycolytic process"/>
    <property type="evidence" value="ECO:0000318"/>
    <property type="project" value="GO_Central"/>
</dbReference>
<dbReference type="GO" id="GO:0001678">
    <property type="term" value="P:intracellular glucose homeostasis"/>
    <property type="evidence" value="ECO:0000318"/>
    <property type="project" value="GO_Central"/>
</dbReference>
<dbReference type="GO" id="GO:0006013">
    <property type="term" value="P:mannose metabolic process"/>
    <property type="evidence" value="ECO:0000314"/>
    <property type="project" value="PomBase"/>
</dbReference>
<dbReference type="GO" id="GO:0009051">
    <property type="term" value="P:pentose-phosphate shunt, oxidative branch"/>
    <property type="evidence" value="ECO:0000304"/>
    <property type="project" value="PomBase"/>
</dbReference>
<dbReference type="FunFam" id="3.30.420.40:FF:000805">
    <property type="entry name" value="Hexokinase-2"/>
    <property type="match status" value="1"/>
</dbReference>
<dbReference type="FunFam" id="1.10.287.1250:FF:000002">
    <property type="entry name" value="Phosphotransferase"/>
    <property type="match status" value="1"/>
</dbReference>
<dbReference type="FunFam" id="3.40.367.20:FF:000004">
    <property type="entry name" value="Phosphotransferase"/>
    <property type="match status" value="1"/>
</dbReference>
<dbReference type="Gene3D" id="1.10.287.1250">
    <property type="match status" value="1"/>
</dbReference>
<dbReference type="Gene3D" id="3.30.420.40">
    <property type="match status" value="1"/>
</dbReference>
<dbReference type="Gene3D" id="3.40.367.20">
    <property type="match status" value="1"/>
</dbReference>
<dbReference type="InterPro" id="IPR043129">
    <property type="entry name" value="ATPase_NBD"/>
</dbReference>
<dbReference type="InterPro" id="IPR001312">
    <property type="entry name" value="Hexokinase"/>
</dbReference>
<dbReference type="InterPro" id="IPR019807">
    <property type="entry name" value="Hexokinase_BS"/>
</dbReference>
<dbReference type="InterPro" id="IPR022673">
    <property type="entry name" value="Hexokinase_C"/>
</dbReference>
<dbReference type="InterPro" id="IPR022672">
    <property type="entry name" value="Hexokinase_N"/>
</dbReference>
<dbReference type="PANTHER" id="PTHR19443">
    <property type="entry name" value="HEXOKINASE"/>
    <property type="match status" value="1"/>
</dbReference>
<dbReference type="PANTHER" id="PTHR19443:SF16">
    <property type="entry name" value="HEXOKINASE TYPE 1-RELATED"/>
    <property type="match status" value="1"/>
</dbReference>
<dbReference type="Pfam" id="PF00349">
    <property type="entry name" value="Hexokinase_1"/>
    <property type="match status" value="1"/>
</dbReference>
<dbReference type="Pfam" id="PF03727">
    <property type="entry name" value="Hexokinase_2"/>
    <property type="match status" value="1"/>
</dbReference>
<dbReference type="PRINTS" id="PR00475">
    <property type="entry name" value="HEXOKINASE"/>
</dbReference>
<dbReference type="SUPFAM" id="SSF53067">
    <property type="entry name" value="Actin-like ATPase domain"/>
    <property type="match status" value="2"/>
</dbReference>
<dbReference type="PROSITE" id="PS00378">
    <property type="entry name" value="HEXOKINASE_1"/>
    <property type="match status" value="1"/>
</dbReference>
<dbReference type="PROSITE" id="PS51748">
    <property type="entry name" value="HEXOKINASE_2"/>
    <property type="match status" value="1"/>
</dbReference>
<gene>
    <name evidence="6" type="primary">hxk1</name>
    <name type="ORF">SPAC24H6.04</name>
</gene>